<sequence>MSLVTTINWEKVDGLVPAVIQDNTSGQVLMLGYMNKEALNKTLETKQVTFWSRTKERLWTKGETSGNVLELKSINLDCDQDTLLVKVNPVGPTCHLGTPTCFDNDAEGKQEQPALVFLHQLEQVLANRKGADPESSYTASLYARGTKRISQKVGEEGVEVALAATSGDKAELVCESADLIYHLIVLLQDQGLSLSDVTEKLQERHNK</sequence>
<reference key="1">
    <citation type="journal article" date="2005" name="Science">
        <title>Life at depth: Photobacterium profundum genome sequence and expression analysis.</title>
        <authorList>
            <person name="Vezzi A."/>
            <person name="Campanaro S."/>
            <person name="D'Angelo M."/>
            <person name="Simonato F."/>
            <person name="Vitulo N."/>
            <person name="Lauro F.M."/>
            <person name="Cestaro A."/>
            <person name="Malacrida G."/>
            <person name="Simionati B."/>
            <person name="Cannata N."/>
            <person name="Romualdi C."/>
            <person name="Bartlett D.H."/>
            <person name="Valle G."/>
        </authorList>
    </citation>
    <scope>NUCLEOTIDE SEQUENCE [LARGE SCALE GENOMIC DNA]</scope>
    <source>
        <strain>ATCC BAA-1253 / SS9</strain>
    </source>
</reference>
<name>HIS2_PHOPR</name>
<proteinExistence type="inferred from homology"/>
<gene>
    <name evidence="1" type="primary">hisI</name>
    <name evidence="1" type="synonym">hisIE</name>
    <name type="ordered locus">PBPRA1085</name>
</gene>
<keyword id="KW-0028">Amino-acid biosynthesis</keyword>
<keyword id="KW-0067">ATP-binding</keyword>
<keyword id="KW-0963">Cytoplasm</keyword>
<keyword id="KW-0368">Histidine biosynthesis</keyword>
<keyword id="KW-0378">Hydrolase</keyword>
<keyword id="KW-0511">Multifunctional enzyme</keyword>
<keyword id="KW-0547">Nucleotide-binding</keyword>
<keyword id="KW-1185">Reference proteome</keyword>
<protein>
    <recommendedName>
        <fullName evidence="1">Histidine biosynthesis bifunctional protein HisIE</fullName>
    </recommendedName>
    <domain>
        <recommendedName>
            <fullName evidence="1">Phosphoribosyl-AMP cyclohydrolase</fullName>
            <shortName evidence="1">PRA-CH</shortName>
            <ecNumber evidence="1">3.5.4.19</ecNumber>
        </recommendedName>
    </domain>
    <domain>
        <recommendedName>
            <fullName evidence="1">Phosphoribosyl-ATP pyrophosphatase</fullName>
            <shortName evidence="1">PRA-PH</shortName>
            <ecNumber evidence="1">3.6.1.31</ecNumber>
        </recommendedName>
    </domain>
</protein>
<dbReference type="EC" id="3.5.4.19" evidence="1"/>
<dbReference type="EC" id="3.6.1.31" evidence="1"/>
<dbReference type="EMBL" id="CR378666">
    <property type="protein sequence ID" value="CAG19496.1"/>
    <property type="molecule type" value="Genomic_DNA"/>
</dbReference>
<dbReference type="RefSeq" id="WP_011217829.1">
    <property type="nucleotide sequence ID" value="NC_006370.1"/>
</dbReference>
<dbReference type="SMR" id="P62349"/>
<dbReference type="STRING" id="298386.PBPRA1085"/>
<dbReference type="KEGG" id="ppr:PBPRA1085"/>
<dbReference type="eggNOG" id="COG0139">
    <property type="taxonomic scope" value="Bacteria"/>
</dbReference>
<dbReference type="eggNOG" id="COG0140">
    <property type="taxonomic scope" value="Bacteria"/>
</dbReference>
<dbReference type="HOGENOM" id="CLU_048577_3_1_6"/>
<dbReference type="UniPathway" id="UPA00031">
    <property type="reaction ID" value="UER00007"/>
</dbReference>
<dbReference type="UniPathway" id="UPA00031">
    <property type="reaction ID" value="UER00008"/>
</dbReference>
<dbReference type="Proteomes" id="UP000000593">
    <property type="component" value="Chromosome 1"/>
</dbReference>
<dbReference type="GO" id="GO:0005737">
    <property type="term" value="C:cytoplasm"/>
    <property type="evidence" value="ECO:0007669"/>
    <property type="project" value="UniProtKB-SubCell"/>
</dbReference>
<dbReference type="GO" id="GO:0005524">
    <property type="term" value="F:ATP binding"/>
    <property type="evidence" value="ECO:0007669"/>
    <property type="project" value="UniProtKB-KW"/>
</dbReference>
<dbReference type="GO" id="GO:0004635">
    <property type="term" value="F:phosphoribosyl-AMP cyclohydrolase activity"/>
    <property type="evidence" value="ECO:0007669"/>
    <property type="project" value="UniProtKB-UniRule"/>
</dbReference>
<dbReference type="GO" id="GO:0004636">
    <property type="term" value="F:phosphoribosyl-ATP diphosphatase activity"/>
    <property type="evidence" value="ECO:0007669"/>
    <property type="project" value="UniProtKB-UniRule"/>
</dbReference>
<dbReference type="GO" id="GO:0000105">
    <property type="term" value="P:L-histidine biosynthetic process"/>
    <property type="evidence" value="ECO:0007669"/>
    <property type="project" value="UniProtKB-UniRule"/>
</dbReference>
<dbReference type="CDD" id="cd11534">
    <property type="entry name" value="NTP-PPase_HisIE_like"/>
    <property type="match status" value="1"/>
</dbReference>
<dbReference type="FunFam" id="1.10.287.1080:FF:000002">
    <property type="entry name" value="Histidine biosynthesis bifunctional protein HisIE"/>
    <property type="match status" value="1"/>
</dbReference>
<dbReference type="FunFam" id="3.10.20.810:FF:000001">
    <property type="entry name" value="Histidine biosynthesis bifunctional protein HisIE"/>
    <property type="match status" value="1"/>
</dbReference>
<dbReference type="Gene3D" id="1.10.287.1080">
    <property type="entry name" value="MazG-like"/>
    <property type="match status" value="1"/>
</dbReference>
<dbReference type="Gene3D" id="3.10.20.810">
    <property type="entry name" value="Phosphoribosyl-AMP cyclohydrolase"/>
    <property type="match status" value="1"/>
</dbReference>
<dbReference type="HAMAP" id="MF_01020">
    <property type="entry name" value="HisE"/>
    <property type="match status" value="1"/>
</dbReference>
<dbReference type="HAMAP" id="MF_01019">
    <property type="entry name" value="HisIE"/>
    <property type="match status" value="1"/>
</dbReference>
<dbReference type="InterPro" id="IPR023019">
    <property type="entry name" value="His_synth_HisIE"/>
</dbReference>
<dbReference type="InterPro" id="IPR008179">
    <property type="entry name" value="HisE"/>
</dbReference>
<dbReference type="InterPro" id="IPR021130">
    <property type="entry name" value="PRib-ATP_PPHydrolase-like"/>
</dbReference>
<dbReference type="InterPro" id="IPR002496">
    <property type="entry name" value="PRib_AMP_CycHydrolase_dom"/>
</dbReference>
<dbReference type="InterPro" id="IPR038019">
    <property type="entry name" value="PRib_AMP_CycHydrolase_sf"/>
</dbReference>
<dbReference type="NCBIfam" id="TIGR03188">
    <property type="entry name" value="histidine_hisI"/>
    <property type="match status" value="1"/>
</dbReference>
<dbReference type="NCBIfam" id="NF000768">
    <property type="entry name" value="PRK00051.1"/>
    <property type="match status" value="1"/>
</dbReference>
<dbReference type="NCBIfam" id="NF002747">
    <property type="entry name" value="PRK02759.1"/>
    <property type="match status" value="1"/>
</dbReference>
<dbReference type="PANTHER" id="PTHR42945">
    <property type="entry name" value="HISTIDINE BIOSYNTHESIS BIFUNCTIONAL PROTEIN"/>
    <property type="match status" value="1"/>
</dbReference>
<dbReference type="PANTHER" id="PTHR42945:SF9">
    <property type="entry name" value="HISTIDINE BIOSYNTHESIS BIFUNCTIONAL PROTEIN HISIE"/>
    <property type="match status" value="1"/>
</dbReference>
<dbReference type="Pfam" id="PF01502">
    <property type="entry name" value="PRA-CH"/>
    <property type="match status" value="1"/>
</dbReference>
<dbReference type="Pfam" id="PF01503">
    <property type="entry name" value="PRA-PH"/>
    <property type="match status" value="1"/>
</dbReference>
<dbReference type="SUPFAM" id="SSF101386">
    <property type="entry name" value="all-alpha NTP pyrophosphatases"/>
    <property type="match status" value="1"/>
</dbReference>
<dbReference type="SUPFAM" id="SSF141734">
    <property type="entry name" value="HisI-like"/>
    <property type="match status" value="1"/>
</dbReference>
<accession>P62349</accession>
<comment type="catalytic activity">
    <reaction evidence="1">
        <text>1-(5-phospho-beta-D-ribosyl)-ATP + H2O = 1-(5-phospho-beta-D-ribosyl)-5'-AMP + diphosphate + H(+)</text>
        <dbReference type="Rhea" id="RHEA:22828"/>
        <dbReference type="ChEBI" id="CHEBI:15377"/>
        <dbReference type="ChEBI" id="CHEBI:15378"/>
        <dbReference type="ChEBI" id="CHEBI:33019"/>
        <dbReference type="ChEBI" id="CHEBI:59457"/>
        <dbReference type="ChEBI" id="CHEBI:73183"/>
        <dbReference type="EC" id="3.6.1.31"/>
    </reaction>
</comment>
<comment type="catalytic activity">
    <reaction evidence="1">
        <text>1-(5-phospho-beta-D-ribosyl)-5'-AMP + H2O = 1-(5-phospho-beta-D-ribosyl)-5-[(5-phospho-beta-D-ribosylamino)methylideneamino]imidazole-4-carboxamide</text>
        <dbReference type="Rhea" id="RHEA:20049"/>
        <dbReference type="ChEBI" id="CHEBI:15377"/>
        <dbReference type="ChEBI" id="CHEBI:58435"/>
        <dbReference type="ChEBI" id="CHEBI:59457"/>
        <dbReference type="EC" id="3.5.4.19"/>
    </reaction>
</comment>
<comment type="pathway">
    <text evidence="1">Amino-acid biosynthesis; L-histidine biosynthesis; L-histidine from 5-phospho-alpha-D-ribose 1-diphosphate: step 2/9.</text>
</comment>
<comment type="pathway">
    <text evidence="1">Amino-acid biosynthesis; L-histidine biosynthesis; L-histidine from 5-phospho-alpha-D-ribose 1-diphosphate: step 3/9.</text>
</comment>
<comment type="subcellular location">
    <subcellularLocation>
        <location evidence="1">Cytoplasm</location>
    </subcellularLocation>
</comment>
<comment type="similarity">
    <text evidence="1">In the N-terminal section; belongs to the PRA-CH family.</text>
</comment>
<comment type="similarity">
    <text evidence="1">In the C-terminal section; belongs to the PRA-PH family.</text>
</comment>
<feature type="chain" id="PRO_0000136422" description="Histidine biosynthesis bifunctional protein HisIE">
    <location>
        <begin position="1"/>
        <end position="207"/>
    </location>
</feature>
<feature type="region of interest" description="Phosphoribosyl-AMP cyclohydrolase">
    <location>
        <begin position="1"/>
        <end position="117"/>
    </location>
</feature>
<feature type="region of interest" description="Phosphoribosyl-ATP pyrophosphohydrolase">
    <location>
        <begin position="118"/>
        <end position="207"/>
    </location>
</feature>
<evidence type="ECO:0000255" key="1">
    <source>
        <dbReference type="HAMAP-Rule" id="MF_01019"/>
    </source>
</evidence>
<organism>
    <name type="scientific">Photobacterium profundum (strain SS9)</name>
    <dbReference type="NCBI Taxonomy" id="298386"/>
    <lineage>
        <taxon>Bacteria</taxon>
        <taxon>Pseudomonadati</taxon>
        <taxon>Pseudomonadota</taxon>
        <taxon>Gammaproteobacteria</taxon>
        <taxon>Vibrionales</taxon>
        <taxon>Vibrionaceae</taxon>
        <taxon>Photobacterium</taxon>
    </lineage>
</organism>